<evidence type="ECO:0000250" key="1"/>
<evidence type="ECO:0000255" key="2"/>
<evidence type="ECO:0000255" key="3">
    <source>
        <dbReference type="PROSITE-ProRule" id="PRU00040"/>
    </source>
</evidence>
<evidence type="ECO:0000269" key="4">
    <source>
    </source>
</evidence>
<evidence type="ECO:0000305" key="5"/>
<reference key="1">
    <citation type="journal article" date="2012" name="Toxicon">
        <title>Molecular cloning and characterization of alboaggregin D, a novel platelet activating protein, from Green pit viper (Cryptelytrops albolabris) venom.</title>
        <authorList>
            <person name="Mekchay P."/>
            <person name="Rojnuckarin P."/>
        </authorList>
    </citation>
    <scope>NUCLEOTIDE SEQUENCE [MRNA]</scope>
    <scope>FUNCTION</scope>
    <scope>SUBUNIT</scope>
    <scope>SUBCELLULAR LOCATION</scope>
    <scope>TISSUE SPECIFICITY</scope>
    <scope>MASS SPECTROMETRY</scope>
    <source>
        <tissue>Venom</tissue>
        <tissue>Venom gland</tissue>
    </source>
</reference>
<proteinExistence type="evidence at protein level"/>
<keyword id="KW-1015">Disulfide bond</keyword>
<keyword id="KW-0325">Glycoprotein</keyword>
<keyword id="KW-1199">Hemostasis impairing toxin</keyword>
<keyword id="KW-1202">Platelet aggregation activating toxin</keyword>
<keyword id="KW-0964">Secreted</keyword>
<keyword id="KW-0732">Signal</keyword>
<keyword id="KW-0800">Toxin</keyword>
<dbReference type="SMR" id="P0DM39"/>
<dbReference type="GO" id="GO:0005576">
    <property type="term" value="C:extracellular region"/>
    <property type="evidence" value="ECO:0007669"/>
    <property type="project" value="UniProtKB-SubCell"/>
</dbReference>
<dbReference type="GO" id="GO:0090729">
    <property type="term" value="F:toxin activity"/>
    <property type="evidence" value="ECO:0007669"/>
    <property type="project" value="UniProtKB-KW"/>
</dbReference>
<dbReference type="FunFam" id="3.10.100.10:FF:000087">
    <property type="entry name" value="Snaclec rhodocetin subunit delta"/>
    <property type="match status" value="1"/>
</dbReference>
<dbReference type="Gene3D" id="3.10.100.10">
    <property type="entry name" value="Mannose-Binding Protein A, subunit A"/>
    <property type="match status" value="1"/>
</dbReference>
<dbReference type="InterPro" id="IPR001304">
    <property type="entry name" value="C-type_lectin-like"/>
</dbReference>
<dbReference type="InterPro" id="IPR016186">
    <property type="entry name" value="C-type_lectin-like/link_sf"/>
</dbReference>
<dbReference type="InterPro" id="IPR050111">
    <property type="entry name" value="C-type_lectin/snaclec_domain"/>
</dbReference>
<dbReference type="InterPro" id="IPR018378">
    <property type="entry name" value="C-type_lectin_CS"/>
</dbReference>
<dbReference type="InterPro" id="IPR016187">
    <property type="entry name" value="CTDL_fold"/>
</dbReference>
<dbReference type="PANTHER" id="PTHR22803">
    <property type="entry name" value="MANNOSE, PHOSPHOLIPASE, LECTIN RECEPTOR RELATED"/>
    <property type="match status" value="1"/>
</dbReference>
<dbReference type="Pfam" id="PF00059">
    <property type="entry name" value="Lectin_C"/>
    <property type="match status" value="1"/>
</dbReference>
<dbReference type="PRINTS" id="PR01504">
    <property type="entry name" value="PNCREATITSAP"/>
</dbReference>
<dbReference type="SMART" id="SM00034">
    <property type="entry name" value="CLECT"/>
    <property type="match status" value="1"/>
</dbReference>
<dbReference type="SUPFAM" id="SSF56436">
    <property type="entry name" value="C-type lectin-like"/>
    <property type="match status" value="1"/>
</dbReference>
<dbReference type="PROSITE" id="PS00615">
    <property type="entry name" value="C_TYPE_LECTIN_1"/>
    <property type="match status" value="1"/>
</dbReference>
<dbReference type="PROSITE" id="PS50041">
    <property type="entry name" value="C_TYPE_LECTIN_2"/>
    <property type="match status" value="1"/>
</dbReference>
<protein>
    <recommendedName>
        <fullName>Snaclec alboaggregin-D subunit beta</fullName>
    </recommendedName>
</protein>
<comment type="function">
    <text evidence="4">Snaclec that induces human platelet aggregation in the absence of any cofactor with the EC(50) of 0.25 nM and causes tyrosine phosphorylation in human platelets. Antibodies against either platelet GPIbalpha (GP1BA) or GPVI (GP6) inhibit alboaggregin D-induced platelet aggregation. Only the combination of these two antibodies completely inhibit aggregation, suggesting that it acts through both GPIbalpha (GP1BA) and GPVI (GP6).</text>
</comment>
<comment type="subunit">
    <text evidence="4">Tetramer of heterodimers of alpha and beta subunits (alphabeta)(4); disulfide-linked.</text>
</comment>
<comment type="subcellular location">
    <subcellularLocation>
        <location evidence="4">Secreted</location>
    </subcellularLocation>
</comment>
<comment type="tissue specificity">
    <text evidence="4">Expressed by the venom gland.</text>
</comment>
<comment type="mass spectrometry"/>
<comment type="similarity">
    <text evidence="5">Belongs to the snaclec family.</text>
</comment>
<accession>P0DM39</accession>
<feature type="signal peptide" evidence="1">
    <location>
        <begin position="1"/>
        <end position="23"/>
    </location>
</feature>
<feature type="chain" id="PRO_0000422609" description="Snaclec alboaggregin-D subunit beta">
    <location>
        <begin position="24"/>
        <end position="148"/>
    </location>
</feature>
<feature type="domain" description="C-type lectin" evidence="3">
    <location>
        <begin position="34"/>
        <end position="145"/>
    </location>
</feature>
<feature type="glycosylation site" description="N-linked (GlcNAc...) asparagine" evidence="2">
    <location>
        <position position="47"/>
    </location>
</feature>
<feature type="glycosylation site" description="N-linked (GlcNAc...) asparagine" evidence="2">
    <location>
        <position position="137"/>
    </location>
</feature>
<feature type="disulfide bond" description="Interchain (with C-158 in subunit alpha)" evidence="3">
    <location>
        <position position="26"/>
    </location>
</feature>
<feature type="disulfide bond" evidence="3">
    <location>
        <begin position="27"/>
        <end position="38"/>
    </location>
</feature>
<feature type="disulfide bond" evidence="3">
    <location>
        <begin position="55"/>
        <end position="144"/>
    </location>
</feature>
<feature type="disulfide bond" description="Interchain (with C-104 in subunit alpha)" evidence="3">
    <location>
        <position position="100"/>
    </location>
</feature>
<feature type="disulfide bond" evidence="3">
    <location>
        <begin position="121"/>
        <end position="136"/>
    </location>
</feature>
<sequence>MGRFISVSFGLLVVFLSLSGAGAGLCCPLDWSSYDLYCYKVFKQQMNWTDAEQFCTQQHTGSHLVSFHSTEEVDFVVQMSYKSLDTTFFWIGVNNIWNGCNWQWSDGTGLDYKEWREQFECLVAKTFDNQWWSMDCNSTYSFVCKFQA</sequence>
<organism>
    <name type="scientific">Trimeresurus albolabris</name>
    <name type="common">White-lipped pit viper</name>
    <name type="synonym">Cryptelytrops albolabris</name>
    <dbReference type="NCBI Taxonomy" id="8765"/>
    <lineage>
        <taxon>Eukaryota</taxon>
        <taxon>Metazoa</taxon>
        <taxon>Chordata</taxon>
        <taxon>Craniata</taxon>
        <taxon>Vertebrata</taxon>
        <taxon>Euteleostomi</taxon>
        <taxon>Lepidosauria</taxon>
        <taxon>Squamata</taxon>
        <taxon>Bifurcata</taxon>
        <taxon>Unidentata</taxon>
        <taxon>Episquamata</taxon>
        <taxon>Toxicofera</taxon>
        <taxon>Serpentes</taxon>
        <taxon>Colubroidea</taxon>
        <taxon>Viperidae</taxon>
        <taxon>Crotalinae</taxon>
        <taxon>Trimeresurus</taxon>
    </lineage>
</organism>
<name>SLDB_TRIAB</name>